<protein>
    <recommendedName>
        <fullName>T-cell leukemia homeobox protein 1</fullName>
    </recommendedName>
    <alternativeName>
        <fullName>Homeobox TLX-1</fullName>
    </alternativeName>
    <alternativeName>
        <fullName>Homeobox protein Hox-11</fullName>
    </alternativeName>
</protein>
<name>TLX1_MOUSE</name>
<evidence type="ECO:0000250" key="1">
    <source>
        <dbReference type="UniProtKB" id="P31314"/>
    </source>
</evidence>
<evidence type="ECO:0000255" key="2">
    <source>
        <dbReference type="PROSITE-ProRule" id="PRU00108"/>
    </source>
</evidence>
<evidence type="ECO:0000269" key="3">
    <source>
    </source>
</evidence>
<evidence type="ECO:0000305" key="4"/>
<reference key="1">
    <citation type="journal article" date="1993" name="Mech. Dev.">
        <title>Characterization and developmental expression of Tlx-1, the murine homolog of HOX11.</title>
        <authorList>
            <person name="Raju K."/>
            <person name="Tang S."/>
            <person name="Dube I.D."/>
            <person name="Kamel-Reid S."/>
            <person name="Bryce D.M."/>
            <person name="Breitman M.L."/>
        </authorList>
    </citation>
    <scope>NUCLEOTIDE SEQUENCE [GENOMIC DNA]</scope>
</reference>
<reference key="2">
    <citation type="journal article" date="1994" name="Nature">
        <title>Hox11 controls the genesis of the spleen.</title>
        <authorList>
            <person name="Roberts C.W.M."/>
            <person name="Shutter J.R."/>
            <person name="Korsmeyer S.J."/>
        </authorList>
    </citation>
    <scope>FUNCTION</scope>
</reference>
<reference key="3">
    <citation type="journal article" date="1995" name="Nucleic Acids Res.">
        <title>The optimal binding sequence of the Hox11 protein contains a predicted recognition core motif.</title>
        <authorList>
            <person name="Tang S."/>
            <person name="Breitman M.L."/>
        </authorList>
    </citation>
    <scope>DNA-BINDING</scope>
</reference>
<gene>
    <name type="primary">Tlx1</name>
    <name type="synonym">Hox11</name>
    <name type="synonym">Tlx-1</name>
</gene>
<proteinExistence type="evidence at protein level"/>
<organism>
    <name type="scientific">Mus musculus</name>
    <name type="common">Mouse</name>
    <dbReference type="NCBI Taxonomy" id="10090"/>
    <lineage>
        <taxon>Eukaryota</taxon>
        <taxon>Metazoa</taxon>
        <taxon>Chordata</taxon>
        <taxon>Craniata</taxon>
        <taxon>Vertebrata</taxon>
        <taxon>Euteleostomi</taxon>
        <taxon>Mammalia</taxon>
        <taxon>Eutheria</taxon>
        <taxon>Euarchontoglires</taxon>
        <taxon>Glires</taxon>
        <taxon>Rodentia</taxon>
        <taxon>Myomorpha</taxon>
        <taxon>Muroidea</taxon>
        <taxon>Muridae</taxon>
        <taxon>Murinae</taxon>
        <taxon>Mus</taxon>
        <taxon>Mus</taxon>
    </lineage>
</organism>
<dbReference type="EMBL" id="S70632">
    <property type="protein sequence ID" value="AAB30542.1"/>
    <property type="molecule type" value="Genomic_DNA"/>
</dbReference>
<dbReference type="EMBL" id="S70756">
    <property type="protein sequence ID" value="AAB30542.1"/>
    <property type="status" value="JOINED"/>
    <property type="molecule type" value="Genomic_DNA"/>
</dbReference>
<dbReference type="EMBL" id="S70629">
    <property type="protein sequence ID" value="AAB30542.1"/>
    <property type="status" value="JOINED"/>
    <property type="molecule type" value="Genomic_DNA"/>
</dbReference>
<dbReference type="SMR" id="P43345"/>
<dbReference type="FunCoup" id="P43345">
    <property type="interactions" value="1275"/>
</dbReference>
<dbReference type="STRING" id="10090.ENSMUSP00000026236"/>
<dbReference type="PhosphoSitePlus" id="P43345"/>
<dbReference type="PaxDb" id="10090-ENSMUSP00000026236"/>
<dbReference type="ProteomicsDB" id="262824"/>
<dbReference type="AGR" id="MGI:98769"/>
<dbReference type="MGI" id="MGI:98769">
    <property type="gene designation" value="Tlx1"/>
</dbReference>
<dbReference type="eggNOG" id="KOG0488">
    <property type="taxonomic scope" value="Eukaryota"/>
</dbReference>
<dbReference type="InParanoid" id="P43345"/>
<dbReference type="PhylomeDB" id="P43345"/>
<dbReference type="PRO" id="PR:P43345"/>
<dbReference type="Proteomes" id="UP000000589">
    <property type="component" value="Unplaced"/>
</dbReference>
<dbReference type="RNAct" id="P43345">
    <property type="molecule type" value="protein"/>
</dbReference>
<dbReference type="GO" id="GO:0005634">
    <property type="term" value="C:nucleus"/>
    <property type="evidence" value="ECO:0007669"/>
    <property type="project" value="UniProtKB-SubCell"/>
</dbReference>
<dbReference type="GO" id="GO:0003677">
    <property type="term" value="F:DNA binding"/>
    <property type="evidence" value="ECO:0007669"/>
    <property type="project" value="UniProtKB-KW"/>
</dbReference>
<dbReference type="GO" id="GO:0000981">
    <property type="term" value="F:DNA-binding transcription factor activity, RNA polymerase II-specific"/>
    <property type="evidence" value="ECO:0007669"/>
    <property type="project" value="InterPro"/>
</dbReference>
<dbReference type="GO" id="GO:0048645">
    <property type="term" value="P:animal organ formation"/>
    <property type="evidence" value="ECO:0000315"/>
    <property type="project" value="MGI"/>
</dbReference>
<dbReference type="GO" id="GO:0045165">
    <property type="term" value="P:cell fate commitment"/>
    <property type="evidence" value="ECO:0000315"/>
    <property type="project" value="MGI"/>
</dbReference>
<dbReference type="GO" id="GO:0008283">
    <property type="term" value="P:cell population proliferation"/>
    <property type="evidence" value="ECO:0000315"/>
    <property type="project" value="MGI"/>
</dbReference>
<dbReference type="GO" id="GO:0007417">
    <property type="term" value="P:central nervous system development"/>
    <property type="evidence" value="ECO:0000315"/>
    <property type="project" value="MGI"/>
</dbReference>
<dbReference type="GO" id="GO:0048535">
    <property type="term" value="P:lymph node development"/>
    <property type="evidence" value="ECO:0000304"/>
    <property type="project" value="MGI"/>
</dbReference>
<dbReference type="GO" id="GO:0030182">
    <property type="term" value="P:neuron differentiation"/>
    <property type="evidence" value="ECO:0000315"/>
    <property type="project" value="MGI"/>
</dbReference>
<dbReference type="GO" id="GO:2000648">
    <property type="term" value="P:positive regulation of stem cell proliferation"/>
    <property type="evidence" value="ECO:0000315"/>
    <property type="project" value="MGI"/>
</dbReference>
<dbReference type="GO" id="GO:0045944">
    <property type="term" value="P:positive regulation of transcription by RNA polymerase II"/>
    <property type="evidence" value="ECO:0000314"/>
    <property type="project" value="MGI"/>
</dbReference>
<dbReference type="GO" id="GO:0048536">
    <property type="term" value="P:spleen development"/>
    <property type="evidence" value="ECO:0000315"/>
    <property type="project" value="MGI"/>
</dbReference>
<dbReference type="GO" id="GO:0072089">
    <property type="term" value="P:stem cell proliferation"/>
    <property type="evidence" value="ECO:0000315"/>
    <property type="project" value="MGI"/>
</dbReference>
<dbReference type="CDD" id="cd00086">
    <property type="entry name" value="homeodomain"/>
    <property type="match status" value="1"/>
</dbReference>
<dbReference type="FunFam" id="1.10.10.60:FF:000040">
    <property type="entry name" value="T-cell leukemia homeobox protein 3"/>
    <property type="match status" value="1"/>
</dbReference>
<dbReference type="Gene3D" id="1.10.10.60">
    <property type="entry name" value="Homeodomain-like"/>
    <property type="match status" value="1"/>
</dbReference>
<dbReference type="InterPro" id="IPR001356">
    <property type="entry name" value="HD"/>
</dbReference>
<dbReference type="InterPro" id="IPR020479">
    <property type="entry name" value="HD_metazoa"/>
</dbReference>
<dbReference type="InterPro" id="IPR017970">
    <property type="entry name" value="Homeobox_CS"/>
</dbReference>
<dbReference type="InterPro" id="IPR009057">
    <property type="entry name" value="Homeodomain-like_sf"/>
</dbReference>
<dbReference type="InterPro" id="IPR042247">
    <property type="entry name" value="TLX1/2/3"/>
</dbReference>
<dbReference type="PANTHER" id="PTHR45921">
    <property type="entry name" value="IP01054P"/>
    <property type="match status" value="1"/>
</dbReference>
<dbReference type="PANTHER" id="PTHR45921:SF2">
    <property type="entry name" value="T-CELL LEUKEMIA HOMEOBOX PROTEIN 1"/>
    <property type="match status" value="1"/>
</dbReference>
<dbReference type="Pfam" id="PF00046">
    <property type="entry name" value="Homeodomain"/>
    <property type="match status" value="1"/>
</dbReference>
<dbReference type="PRINTS" id="PR00024">
    <property type="entry name" value="HOMEOBOX"/>
</dbReference>
<dbReference type="SMART" id="SM00389">
    <property type="entry name" value="HOX"/>
    <property type="match status" value="1"/>
</dbReference>
<dbReference type="SUPFAM" id="SSF46689">
    <property type="entry name" value="Homeodomain-like"/>
    <property type="match status" value="1"/>
</dbReference>
<dbReference type="PROSITE" id="PS00027">
    <property type="entry name" value="HOMEOBOX_1"/>
    <property type="match status" value="1"/>
</dbReference>
<dbReference type="PROSITE" id="PS50071">
    <property type="entry name" value="HOMEOBOX_2"/>
    <property type="match status" value="1"/>
</dbReference>
<keyword id="KW-0007">Acetylation</keyword>
<keyword id="KW-0217">Developmental protein</keyword>
<keyword id="KW-0238">DNA-binding</keyword>
<keyword id="KW-0371">Homeobox</keyword>
<keyword id="KW-0539">Nucleus</keyword>
<keyword id="KW-1185">Reference proteome</keyword>
<feature type="chain" id="PRO_0000049334" description="T-cell leukemia homeobox protein 1">
    <location>
        <begin position="1"/>
        <end position="332"/>
    </location>
</feature>
<feature type="DNA-binding region" description="Homeobox" evidence="2">
    <location>
        <begin position="203"/>
        <end position="262"/>
    </location>
</feature>
<feature type="modified residue" description="N6-acetyllysine" evidence="1">
    <location>
        <position position="238"/>
    </location>
</feature>
<comment type="function">
    <text evidence="3">Controls the genesis of the spleen. Binds to the DNA sequence 5'-GGCGGTAAGTGG-3'.</text>
</comment>
<comment type="subcellular location">
    <subcellularLocation>
        <location evidence="4">Nucleus</location>
    </subcellularLocation>
</comment>
<comment type="tissue specificity">
    <text>Expressed in various embryonic tissues, including branchial arches, some component of the nervous system and spleen.</text>
</comment>
<accession>P43345</accession>
<sequence length="332" mass="34644">MEHLGPHHLHPGHAEPISFGIEQILNSPDQGGCMGPNSRLQDGDYGLGCLVPGAYTYGGGGSAAGAGAGGTGAYGAGGPGGPGGPAGGGGGACSMGPLPGSYNVNMDLAGGPGPGGDGGGGGAARRALSAAGVIRVPAHRPLAGAVAHPQPLATGLPTVPSVPAVPGVNNLTGLTFPWMESNRRYTKDRFTGLPYQNRTPPKKKKPRTSFTRLQICELEKRFHRQKYLASAERAALAKALKMTDAQVKTWFQNRRTKWRRQTAEEREAESEQANRILLQLQQEAFQKSLAQPLPADPLCVHNSSLFALQNLQPWSDDSTKITSVTSVASACE</sequence>